<keyword id="KW-0249">Electron transport</keyword>
<keyword id="KW-0472">Membrane</keyword>
<keyword id="KW-0496">Mitochondrion</keyword>
<keyword id="KW-0520">NAD</keyword>
<keyword id="KW-0679">Respiratory chain</keyword>
<keyword id="KW-1278">Translocase</keyword>
<keyword id="KW-0812">Transmembrane</keyword>
<keyword id="KW-1133">Transmembrane helix</keyword>
<keyword id="KW-0813">Transport</keyword>
<keyword id="KW-0830">Ubiquinone</keyword>
<protein>
    <recommendedName>
        <fullName>NADH-ubiquinone oxidoreductase chain 6</fullName>
        <ecNumber>7.1.1.2</ecNumber>
    </recommendedName>
    <alternativeName>
        <fullName>NADH dehydrogenase subunit 6</fullName>
    </alternativeName>
</protein>
<gene>
    <name type="primary">ND6</name>
</gene>
<accession>P24873</accession>
<feature type="chain" id="PRO_0000118244" description="NADH-ubiquinone oxidoreductase chain 6">
    <location>
        <begin position="1"/>
        <end position="144"/>
    </location>
</feature>
<feature type="transmembrane region" description="Helical" evidence="2">
    <location>
        <begin position="1"/>
        <end position="21"/>
    </location>
</feature>
<feature type="transmembrane region" description="Helical" evidence="2">
    <location>
        <begin position="26"/>
        <end position="46"/>
    </location>
</feature>
<feature type="transmembrane region" description="Helical" evidence="2">
    <location>
        <begin position="47"/>
        <end position="67"/>
    </location>
</feature>
<feature type="transmembrane region" description="Helical" evidence="2">
    <location>
        <begin position="76"/>
        <end position="96"/>
    </location>
</feature>
<feature type="transmembrane region" description="Helical" evidence="2">
    <location>
        <begin position="108"/>
        <end position="128"/>
    </location>
</feature>
<sequence length="144" mass="16924">MLGSFFFLAIISCVMSYINVDPMKSSFFLIFSLLMVMPLISFFLHVWFSYFICLLFLSGIFVILVYFSSLSKIGYVVTPFYFVGGVLSVFFFYPFFYSVTDVVAVNNFYFSVYWMLLVWVIFVLIFFMNFTSYFLNFSGALRKV</sequence>
<evidence type="ECO:0000250" key="1"/>
<evidence type="ECO:0000255" key="2"/>
<evidence type="ECO:0000305" key="3"/>
<comment type="function">
    <text evidence="1">Core subunit of the mitochondrial membrane respiratory chain NADH dehydrogenase (Complex I) that is believed to belong to the minimal assembly required for catalysis. Complex I functions in the transfer of electrons from NADH to the respiratory chain. The immediate electron acceptor for the enzyme is believed to be ubiquinone (By similarity).</text>
</comment>
<comment type="catalytic activity">
    <reaction>
        <text>a ubiquinone + NADH + 5 H(+)(in) = a ubiquinol + NAD(+) + 4 H(+)(out)</text>
        <dbReference type="Rhea" id="RHEA:29091"/>
        <dbReference type="Rhea" id="RHEA-COMP:9565"/>
        <dbReference type="Rhea" id="RHEA-COMP:9566"/>
        <dbReference type="ChEBI" id="CHEBI:15378"/>
        <dbReference type="ChEBI" id="CHEBI:16389"/>
        <dbReference type="ChEBI" id="CHEBI:17976"/>
        <dbReference type="ChEBI" id="CHEBI:57540"/>
        <dbReference type="ChEBI" id="CHEBI:57945"/>
        <dbReference type="EC" id="7.1.1.2"/>
    </reaction>
</comment>
<comment type="subcellular location">
    <subcellularLocation>
        <location evidence="3">Mitochondrion membrane</location>
        <topology evidence="3">Multi-pass membrane protein</topology>
    </subcellularLocation>
</comment>
<comment type="similarity">
    <text evidence="3">Belongs to the complex I subunit 6 family.</text>
</comment>
<name>NU6M_ASCSU</name>
<proteinExistence type="inferred from homology"/>
<geneLocation type="mitochondrion"/>
<dbReference type="EC" id="7.1.1.2"/>
<dbReference type="EMBL" id="X54253">
    <property type="protein sequence ID" value="CAA38163.1"/>
    <property type="molecule type" value="Genomic_DNA"/>
</dbReference>
<dbReference type="PIR" id="S26014">
    <property type="entry name" value="S26014"/>
</dbReference>
<dbReference type="RefSeq" id="NP_006941.1">
    <property type="nucleotide sequence ID" value="NC_001327.1"/>
</dbReference>
<dbReference type="SMR" id="P24873"/>
<dbReference type="GeneID" id="807664"/>
<dbReference type="CTD" id="4541"/>
<dbReference type="GO" id="GO:0031966">
    <property type="term" value="C:mitochondrial membrane"/>
    <property type="evidence" value="ECO:0007669"/>
    <property type="project" value="UniProtKB-SubCell"/>
</dbReference>
<dbReference type="GO" id="GO:0008137">
    <property type="term" value="F:NADH dehydrogenase (ubiquinone) activity"/>
    <property type="evidence" value="ECO:0007669"/>
    <property type="project" value="UniProtKB-EC"/>
</dbReference>
<reference key="1">
    <citation type="journal article" date="1992" name="Genetics">
        <title>The mitochondrial genomes of two nematodes, Caenorhabditis elegans and Ascaris suum.</title>
        <authorList>
            <person name="Okimoto R."/>
            <person name="Macfarlane J.L."/>
            <person name="Clary D.O."/>
            <person name="Wolstenholme D.R."/>
        </authorList>
    </citation>
    <scope>NUCLEOTIDE SEQUENCE [GENOMIC DNA]</scope>
    <source>
        <tissue>Body wall muscle</tissue>
        <tissue>Egg</tissue>
    </source>
</reference>
<organism>
    <name type="scientific">Ascaris suum</name>
    <name type="common">Pig roundworm</name>
    <name type="synonym">Ascaris lumbricoides</name>
    <dbReference type="NCBI Taxonomy" id="6253"/>
    <lineage>
        <taxon>Eukaryota</taxon>
        <taxon>Metazoa</taxon>
        <taxon>Ecdysozoa</taxon>
        <taxon>Nematoda</taxon>
        <taxon>Chromadorea</taxon>
        <taxon>Rhabditida</taxon>
        <taxon>Spirurina</taxon>
        <taxon>Ascaridomorpha</taxon>
        <taxon>Ascaridoidea</taxon>
        <taxon>Ascarididae</taxon>
        <taxon>Ascaris</taxon>
    </lineage>
</organism>